<proteinExistence type="evidence at protein level"/>
<organism>
    <name type="scientific">Conus pennaceus</name>
    <name type="common">Feathered cone</name>
    <name type="synonym">Conus episcopus</name>
    <dbReference type="NCBI Taxonomy" id="37335"/>
    <lineage>
        <taxon>Eukaryota</taxon>
        <taxon>Metazoa</taxon>
        <taxon>Spiralia</taxon>
        <taxon>Lophotrochozoa</taxon>
        <taxon>Mollusca</taxon>
        <taxon>Gastropoda</taxon>
        <taxon>Caenogastropoda</taxon>
        <taxon>Neogastropoda</taxon>
        <taxon>Conoidea</taxon>
        <taxon>Conidae</taxon>
        <taxon>Conus</taxon>
        <taxon>Darioconus</taxon>
    </lineage>
</organism>
<reference key="1">
    <citation type="journal article" date="1994" name="Biochemistry">
        <title>New mollusc-specific alpha-conotoxins block Aplysia neuronal acetylcholine receptors.</title>
        <authorList>
            <person name="Fainzilber M."/>
            <person name="Hasson A."/>
            <person name="Oren R."/>
            <person name="Burlingame A.L."/>
            <person name="Gordon D."/>
            <person name="Spira M.E."/>
            <person name="Zlotkin E."/>
        </authorList>
    </citation>
    <scope>PROTEIN SEQUENCE</scope>
    <scope>AMIDATION AT CYS-16</scope>
    <scope>FUNCTION</scope>
    <scope>SUBCELLULAR LOCATION</scope>
    <source>
        <tissue>Venom</tissue>
    </source>
</reference>
<reference key="2">
    <citation type="journal article" date="1999" name="J. Mass Spectrom.">
        <title>Identification of tyrosine sulfation in Conus pennaceus conotoxins alpha-PnIA and alpha-PnIB: further investigation of labile sulfo- and phosphopeptides by electrospray, matrix-assisted laser desorption/ionization (MALDI) and atmospheric pressure MALDI mass spectrometry.</title>
        <authorList>
            <person name="Wolfender J.L."/>
            <person name="Chu F."/>
            <person name="Ball H."/>
            <person name="Wolfender F."/>
            <person name="Fainzilber M."/>
            <person name="Baldwin M.A."/>
            <person name="Burlingame A.L."/>
        </authorList>
    </citation>
    <scope>SULFATION AT TYR-15</scope>
</reference>
<reference key="3">
    <citation type="journal article" date="1999" name="Biochemistry">
        <title>Single-residue alteration in alpha-conotoxin PnIA switches its nAChR subtype selectivity.</title>
        <authorList>
            <person name="Luo S."/>
            <person name="Nguyen T.A."/>
            <person name="Cartier G.E."/>
            <person name="Olivera B.M."/>
            <person name="Yoshikami D."/>
            <person name="McIntosh J.M."/>
        </authorList>
    </citation>
    <scope>FUNCTION</scope>
    <scope>SYNTHESIS</scope>
    <scope>MUTAGENESIS OF ALA-10 AND ASN-11</scope>
</reference>
<reference key="4">
    <citation type="journal article" date="2003" name="J. Pharmacol. Exp. Ther.">
        <title>Identification of residues that confer alpha-conotoxin-PnIA sensitivity on the alpha 3 subunit of neuronal nicotinic acetylcholine receptors.</title>
        <authorList>
            <person name="Everhart D."/>
            <person name="Reiller E."/>
            <person name="Mirzoian A."/>
            <person name="McIntosh J.M."/>
            <person name="Malhotra A."/>
            <person name="Luetje C.W."/>
        </authorList>
    </citation>
    <scope>FUNCTION</scope>
    <scope>3D-STRUCTURE MODELING</scope>
</reference>
<reference key="5">
    <citation type="journal article" date="2005" name="J. Biol. Chem.">
        <title>Beta2 subunit contribution to 4/7 alpha-conotoxin binding to the nicotinic acetylcholine receptor.</title>
        <authorList>
            <person name="Dutertre S."/>
            <person name="Nicke A."/>
            <person name="Lewis R.J."/>
        </authorList>
    </citation>
    <scope>FUNCTION ON ALPHA-3-BETA-2 AND ALPHA-4-BETA-2 NACHR</scope>
    <scope>MUTAGENESIS OF ALA-10</scope>
</reference>
<reference key="6">
    <citation type="journal article" date="2007" name="EMBO J.">
        <title>AChBP-targeted alpha-conotoxin correlates distinct binding orientations with nAChR subtype selectivity.</title>
        <authorList>
            <person name="Dutertre S."/>
            <person name="Ulens C."/>
            <person name="Buettner R."/>
            <person name="Fish A."/>
            <person name="van Elk R."/>
            <person name="Kendel Y."/>
            <person name="Hopping G."/>
            <person name="Alewood P.F."/>
            <person name="Schroeder C."/>
            <person name="Nicke A."/>
            <person name="Smit A.B."/>
            <person name="Sixma T.K."/>
            <person name="Lewis R.J."/>
        </authorList>
    </citation>
    <scope>FUNCTION</scope>
    <scope>MUTAGENESIS OF LEU-5 AND ALA-10</scope>
</reference>
<reference key="7">
    <citation type="journal article" date="2009" name="J. Biol. Chem.">
        <title>Rational design of alpha-conotoxin analogues targeting alpha7 nicotinic acetylcholine receptors: improved antagonistic activity by incorporation of proline derivatives.</title>
        <authorList>
            <person name="Armishaw C."/>
            <person name="Jensen A.A."/>
            <person name="Balle T."/>
            <person name="Clark R.J."/>
            <person name="Harpsoee K."/>
            <person name="Skonberg C."/>
            <person name="Liljefors T."/>
            <person name="Stroemgaard K."/>
        </authorList>
    </citation>
    <scope>FUNCTION ON ALPHA-7 AND ALPHA-3-BETA-4</scope>
    <scope>SYNTHESIS</scope>
    <scope>MUTAGENESIS OF ALA-10</scope>
</reference>
<reference key="8">
    <citation type="journal article" date="2012" name="FASEB J.">
        <title>Nicotinic acetylcholine receptors in dorsal root ganglion neurons include the alpha6beta4* subtype.</title>
        <authorList>
            <person name="Hone A.J."/>
            <person name="Meyer E.L."/>
            <person name="McIntyre M."/>
            <person name="McIntosh J.M."/>
        </authorList>
    </citation>
    <scope>FUNCTION</scope>
</reference>
<reference key="9">
    <citation type="journal article" date="2014" name="Biochem. Pharmacol.">
        <title>Hydrophobic residues at position 10 of alpha-conotoxin PnIA influence subtype selectivity between alpha7 and alpha3beta2 neuronal nicotinic acetylcholine receptors.</title>
        <authorList>
            <person name="Hopping G."/>
            <person name="Wang C.I."/>
            <person name="Hogg R.C."/>
            <person name="Nevin S.T."/>
            <person name="Lewis R.J."/>
            <person name="Adams D.J."/>
            <person name="Alewood P.F."/>
        </authorList>
    </citation>
    <scope>FUNCTION</scope>
    <scope>MUTAGENESIS OF ALA-10</scope>
</reference>
<reference key="10">
    <citation type="journal article" date="2018" name="Neuropharmacology">
        <title>Species specificity of rat and human alpha7 nicotinic acetylcholine receptors towards different classes of peptide and protein antagonists.</title>
        <authorList>
            <person name="Yu J."/>
            <person name="Zhu X."/>
            <person name="Zhang L."/>
            <person name="Kudryavtsev D."/>
            <person name="Kasheverov I."/>
            <person name="Lei Y."/>
            <person name="Zhangsun D."/>
            <person name="Tsetlin V."/>
            <person name="Luo S."/>
        </authorList>
    </citation>
    <scope>MUTAGENESIS OF ALA-10</scope>
    <scope>SYNTHESIS</scope>
</reference>
<reference key="11">
    <citation type="journal article" date="2020" name="Mar. Drugs">
        <title>Alpha-conotoxins enhance both the in vivo suppression of Ehrlich carcinoma growth and in vitro reduction in cell viability elicited by cyclooxygenase and lipoxygenase inhibitors.</title>
        <authorList>
            <person name="Osipov A.V."/>
            <person name="Terpinskaya T.I."/>
            <person name="Yanchanka T."/>
            <person name="Balashevich T."/>
            <person name="Zhmak M.N."/>
            <person name="Tsetlin V.I."/>
            <person name="Utkin Y.N."/>
        </authorList>
    </citation>
    <scope>FUNCTION</scope>
</reference>
<reference evidence="19" key="12">
    <citation type="journal article" date="1996" name="Structure">
        <title>The 1.1 A crystal structure of the neuronal acetylcholine receptor antagonist, alpha-conotoxin PnIA from Conus pennaceus.</title>
        <authorList>
            <person name="Hu S.-H."/>
            <person name="Gehrmann J."/>
            <person name="Guddat L.W."/>
            <person name="Alewood P.F."/>
            <person name="Craik D.J."/>
            <person name="Martin J.L."/>
        </authorList>
    </citation>
    <scope>X-RAY CRYSTALLOGRAPHY (2.4 ANGSTROMS) (NON-SULFATED CONOTOXIN)</scope>
    <scope>DISULFIDE BONDS</scope>
</reference>
<reference evidence="21" key="13">
    <citation type="journal article" date="2021" name="RSC Med. Chem.">
        <title>Posttranslational modifications of alpha-conotoxins: sulfotyrosine and C-terminal amidation stabilise structures and increase acetylcholine receptor binding.</title>
        <authorList>
            <person name="Ho T.N.T."/>
            <person name="Lee H.S."/>
            <person name="Swaminathan S."/>
            <person name="Goodwin L."/>
            <person name="Rai N."/>
            <person name="Ushay B."/>
            <person name="Lewis R.J."/>
            <person name="Rosengren K.J."/>
            <person name="Conibear A.C."/>
        </authorList>
    </citation>
    <scope>STRUCTURE BY NMR (SULFATED CONOTOXIN)</scope>
    <scope>SYNTHESIS (SULFATED; NON-SULFATED; AMIDATED AND NON-AMIDATED CONOTOXIN)</scope>
    <scope>PTM</scope>
</reference>
<name>CA1A_CONPE</name>
<protein>
    <recommendedName>
        <fullName evidence="13 14">Alpha-conotoxin PnIA</fullName>
        <shortName evidence="13 14">Alpha-PnIA</shortName>
    </recommendedName>
</protein>
<sequence>GCCSLPPCAANNPDYC</sequence>
<feature type="peptide" id="PRO_0000044462" description="Alpha-conotoxin PnIA" evidence="11">
    <location>
        <begin position="1"/>
        <end position="16"/>
    </location>
</feature>
<feature type="region of interest" description="Ser-Xaa-Pro motif, crucial for potent interaction with nAChR" evidence="1">
    <location>
        <begin position="4"/>
        <end position="6"/>
    </location>
</feature>
<feature type="site" description="Important for inhibitory potency on alpha-3-beta-2/CHRNA3-CHRNB2 nAChR; interacts with a hydrophobic pocket between the two alpha-7/CHRNA7 subunits or between the alpha-3 and the beta-2 subunits of alpha-3-beta-2/CHRNA3-CHRNB2 nAChR" evidence="16 17">
    <location>
        <position position="10"/>
    </location>
</feature>
<feature type="site" description="Important for inhibitory potency on alpha-3-beta-2/CHRNA3-CHRNB2 and alpha-7/CHRNA7 nAChR" evidence="16">
    <location>
        <position position="11"/>
    </location>
</feature>
<feature type="modified residue" description="Sulfotyrosine" evidence="2">
    <location>
        <position position="15"/>
    </location>
</feature>
<feature type="modified residue" description="Cysteine amide" evidence="11">
    <location>
        <position position="16"/>
    </location>
</feature>
<feature type="disulfide bond" evidence="11 12 19 20">
    <location>
        <begin position="2"/>
        <end position="8"/>
    </location>
</feature>
<feature type="disulfide bond" evidence="11 12 19 20">
    <location>
        <begin position="3"/>
        <end position="16"/>
    </location>
</feature>
<feature type="mutagenesis site" description="In PnIA(L5R-A10L); 25-fold increase in inhibitory potency on alpha-7/CHRNA7 and small increase in inhibitory potency on alpha-3-beta-2/CHRNA3-CHRNB2; when associated with L-10." evidence="6">
    <original>L</original>
    <variation>R</variation>
    <location>
        <position position="5"/>
    </location>
</feature>
<feature type="mutagenesis site" description="In PnIA(L5R-A10L); 25-fold increase in inhibitory potency on alpha-7/CHRNA7 and small increase in inhibitory potency on alpha-3-beta-2/CHRNA3-CHRNB2; when associated with R-5." evidence="6">
    <original>A</original>
    <variation>L</variation>
    <location>
        <position position="10"/>
    </location>
</feature>
<feature type="mutagenesis site" description="Selectivity change from alpha-3-beta-2/CHRNA3-CHRNB2 to alpha-7/CHRNA7. 20-fold increase in inhibitory potency on alpha-7/CHRNA7, 7-10-fold decrease in inhibitory potency on alpha-3-beta-2/CHRNA3-CHRNB2, and no change in inhibitory potency on alpha-4-beta-2/CHRNA4-CHRNB2 nAChRs." evidence="3 5 8 9">
    <original>A</original>
    <variation>L</variation>
    <location>
        <position position="10"/>
    </location>
</feature>
<feature type="mutagenesis site" description="7-fold decrease in inhibitory potency on alpha-7/CHRNA7 and 25-fold decrease in inhibitory potency on alpha-3-beta-2/CHRNA3-CHRNB2 nAChRs." evidence="3">
    <original>N</original>
    <variation>S</variation>
    <location>
        <position position="11"/>
    </location>
</feature>
<feature type="helix" evidence="22">
    <location>
        <begin position="2"/>
        <end position="4"/>
    </location>
</feature>
<feature type="helix" evidence="22">
    <location>
        <begin position="6"/>
        <end position="11"/>
    </location>
</feature>
<feature type="turn" evidence="22">
    <location>
        <begin position="13"/>
        <end position="15"/>
    </location>
</feature>
<accession>P50984</accession>
<dbReference type="PIR" id="A54877">
    <property type="entry name" value="A54877"/>
</dbReference>
<dbReference type="PDB" id="1PEN">
    <property type="method" value="X-ray"/>
    <property type="resolution" value="1.10 A"/>
    <property type="chains" value="A=1-16"/>
</dbReference>
<dbReference type="PDB" id="2BR8">
    <property type="method" value="X-ray"/>
    <property type="resolution" value="2.40 A"/>
    <property type="chains" value="F/G/H/I/J=1-16"/>
</dbReference>
<dbReference type="PDB" id="7N1Z">
    <property type="method" value="NMR"/>
    <property type="chains" value="A=1-16"/>
</dbReference>
<dbReference type="PDBsum" id="1PEN"/>
<dbReference type="PDBsum" id="2BR8"/>
<dbReference type="PDBsum" id="7N1Z"/>
<dbReference type="SMR" id="P50984"/>
<dbReference type="DIP" id="DIP-60493N"/>
<dbReference type="IntAct" id="P50984">
    <property type="interactions" value="2"/>
</dbReference>
<dbReference type="ConoServer" id="75">
    <property type="toxin name" value="Pni1"/>
</dbReference>
<dbReference type="ConoServer" id="51">
    <property type="toxin name" value="PnIA"/>
</dbReference>
<dbReference type="EvolutionaryTrace" id="P50984"/>
<dbReference type="GO" id="GO:0005576">
    <property type="term" value="C:extracellular region"/>
    <property type="evidence" value="ECO:0007669"/>
    <property type="project" value="UniProtKB-SubCell"/>
</dbReference>
<dbReference type="GO" id="GO:0035792">
    <property type="term" value="C:host cell postsynaptic membrane"/>
    <property type="evidence" value="ECO:0007669"/>
    <property type="project" value="UniProtKB-KW"/>
</dbReference>
<dbReference type="GO" id="GO:0030550">
    <property type="term" value="F:acetylcholine receptor inhibitor activity"/>
    <property type="evidence" value="ECO:0007669"/>
    <property type="project" value="UniProtKB-KW"/>
</dbReference>
<dbReference type="GO" id="GO:0099106">
    <property type="term" value="F:ion channel regulator activity"/>
    <property type="evidence" value="ECO:0007669"/>
    <property type="project" value="UniProtKB-KW"/>
</dbReference>
<dbReference type="GO" id="GO:0090729">
    <property type="term" value="F:toxin activity"/>
    <property type="evidence" value="ECO:0007669"/>
    <property type="project" value="UniProtKB-KW"/>
</dbReference>
<dbReference type="InterPro" id="IPR018072">
    <property type="entry name" value="Conotoxin_a-typ_CS"/>
</dbReference>
<dbReference type="PROSITE" id="PS60014">
    <property type="entry name" value="ALPHA_CONOTOXIN"/>
    <property type="match status" value="1"/>
</dbReference>
<keyword id="KW-0002">3D-structure</keyword>
<keyword id="KW-0008">Acetylcholine receptor inhibiting toxin</keyword>
<keyword id="KW-0027">Amidation</keyword>
<keyword id="KW-0903">Direct protein sequencing</keyword>
<keyword id="KW-1015">Disulfide bond</keyword>
<keyword id="KW-0872">Ion channel impairing toxin</keyword>
<keyword id="KW-0528">Neurotoxin</keyword>
<keyword id="KW-0629">Postsynaptic neurotoxin</keyword>
<keyword id="KW-0964">Secreted</keyword>
<keyword id="KW-0765">Sulfation</keyword>
<keyword id="KW-0800">Toxin</keyword>
<evidence type="ECO:0000250" key="1">
    <source>
        <dbReference type="UniProtKB" id="P56636"/>
    </source>
</evidence>
<evidence type="ECO:0000269" key="2">
    <source>
    </source>
</evidence>
<evidence type="ECO:0000269" key="3">
    <source>
    </source>
</evidence>
<evidence type="ECO:0000269" key="4">
    <source>
    </source>
</evidence>
<evidence type="ECO:0000269" key="5">
    <source>
    </source>
</evidence>
<evidence type="ECO:0000269" key="6">
    <source>
    </source>
</evidence>
<evidence type="ECO:0000269" key="7">
    <source>
    </source>
</evidence>
<evidence type="ECO:0000269" key="8">
    <source>
    </source>
</evidence>
<evidence type="ECO:0000269" key="9">
    <source>
    </source>
</evidence>
<evidence type="ECO:0000269" key="10">
    <source>
    </source>
</evidence>
<evidence type="ECO:0000269" key="11">
    <source>
    </source>
</evidence>
<evidence type="ECO:0000269" key="12">
    <source>
    </source>
</evidence>
<evidence type="ECO:0000303" key="13">
    <source>
    </source>
</evidence>
<evidence type="ECO:0000303" key="14">
    <source>
    </source>
</evidence>
<evidence type="ECO:0000305" key="15"/>
<evidence type="ECO:0000305" key="16">
    <source>
    </source>
</evidence>
<evidence type="ECO:0000305" key="17">
    <source>
    </source>
</evidence>
<evidence type="ECO:0000305" key="18">
    <source>
    </source>
</evidence>
<evidence type="ECO:0007744" key="19">
    <source>
        <dbReference type="PDB" id="1PEN"/>
    </source>
</evidence>
<evidence type="ECO:0007744" key="20">
    <source>
        <dbReference type="PDB" id="2BR8"/>
    </source>
</evidence>
<evidence type="ECO:0007744" key="21">
    <source>
        <dbReference type="PDB" id="7N1Z"/>
    </source>
</evidence>
<evidence type="ECO:0007829" key="22">
    <source>
        <dbReference type="PDB" id="1PEN"/>
    </source>
</evidence>
<comment type="function">
    <text evidence="3 4 5 7 8 11">Alpha-conotoxins act on postsynaptic membranes, they bind to the nicotinic acetylcholine receptors (nAChR) and thus inhibit them. This toxin blocks mammalian alpha-3-beta-2/CHRNA3-CHRNB2 (IC(50)=7-68 nM) and alpha-7/CHRNA7 (IC(50)=253 nM) nAChRs (PubMed:10545176, PubMed:15929983, PubMed:22024738, PubMed:25101833, PubMed:8068627). It also shows a high inhibition on alpha-6/alpha-3-beta-2-beta-3 (CHRNA6/CHRNA3-CHRNB2-CHRNB3) (IC(50)=11 nM) and a low inhibition on alpha-6-beta-4/CHRNA4-CHRNB4 (IC(50)&gt;500 nM) (PubMed:22024738). It interacts with a hydrophobic pocket between two acetylcholine receptor subunits. In vivo, inhibits Ehrlich carcinoma growth and increase mouse survival (PubMed:32272633). These effects are greatly enhanced when the toxin is applied with the selective 12-lipoxygenase inhibitor baicalein (PubMed:32272633).</text>
</comment>
<comment type="interaction">
    <interactant intactId="EBI-15553601">
        <id>P50984</id>
    </interactant>
    <interactant intactId="EBI-7179765">
        <id>Q8WSF8</id>
    </interactant>
    <organismsDiffer>true</organismsDiffer>
    <experiments>2</experiments>
</comment>
<comment type="subcellular location">
    <subcellularLocation>
        <location evidence="11">Secreted</location>
    </subcellularLocation>
</comment>
<comment type="tissue specificity">
    <text evidence="18">Expressed by the venom duct.</text>
</comment>
<comment type="domain">
    <text evidence="15">The cysteine framework is I (CC-C-C). Alpha4/7 pattern.</text>
</comment>
<comment type="PTM">
    <text evidence="10">Both tyrosine sulfation and C-terminal amidation are important for activity and structure stability.</text>
</comment>
<comment type="miscellaneous">
    <text evidence="8">The replacement of Ala-10 by a norleucine (A10Nle) produces the more potent analog on alpha-7/CHRNA7 (IC(50)=4.3 nM) and on alpha-3-beta-2/CHRNA3-CHRNB2 (IC(50)=0.7 nM) (PubMed:25101833).</text>
</comment>
<comment type="miscellaneous">
    <text evidence="4 5 7">This toxin shows no or very weak inhibition on alpha-2-beta-2/CHRNA2-CHRNB2, alpha-3-beta-4/CHRNA3-CHRNB4, alpha-4-beta-2/CHRNA4-CHRNB2 and alpha-6/alpha-3-beta-4 nAChRs.</text>
</comment>
<comment type="similarity">
    <text evidence="15">Belongs to the conotoxin A superfamily.</text>
</comment>